<sequence length="104" mass="12174">MTEHNHNHDVELDISNEEELLTLFDENGNEVLYRKMLEFYHPEFKKEYVILAEEGAQSDDDDMIELIPMINEPDESGDGGKLVPIETDEEWDMIEEVVNTNMEE</sequence>
<name>Y1304_STAHJ</name>
<organism>
    <name type="scientific">Staphylococcus haemolyticus (strain JCSC1435)</name>
    <dbReference type="NCBI Taxonomy" id="279808"/>
    <lineage>
        <taxon>Bacteria</taxon>
        <taxon>Bacillati</taxon>
        <taxon>Bacillota</taxon>
        <taxon>Bacilli</taxon>
        <taxon>Bacillales</taxon>
        <taxon>Staphylococcaceae</taxon>
        <taxon>Staphylococcus</taxon>
    </lineage>
</organism>
<comment type="similarity">
    <text evidence="1">Belongs to the UPF0473 family.</text>
</comment>
<proteinExistence type="inferred from homology"/>
<gene>
    <name type="ordered locus">SH1304</name>
</gene>
<protein>
    <recommendedName>
        <fullName>UPF0473 protein SH1304</fullName>
    </recommendedName>
</protein>
<dbReference type="EMBL" id="AP006716">
    <property type="protein sequence ID" value="BAE04613.1"/>
    <property type="molecule type" value="Genomic_DNA"/>
</dbReference>
<dbReference type="RefSeq" id="WP_011275602.1">
    <property type="nucleotide sequence ID" value="NC_007168.1"/>
</dbReference>
<dbReference type="KEGG" id="sha:SH1304"/>
<dbReference type="eggNOG" id="COG3906">
    <property type="taxonomic scope" value="Bacteria"/>
</dbReference>
<dbReference type="HOGENOM" id="CLU_146610_2_1_9"/>
<dbReference type="OrthoDB" id="2086132at2"/>
<dbReference type="Proteomes" id="UP000000543">
    <property type="component" value="Chromosome"/>
</dbReference>
<dbReference type="HAMAP" id="MF_01448">
    <property type="entry name" value="UPF0473"/>
    <property type="match status" value="1"/>
</dbReference>
<dbReference type="InterPro" id="IPR009711">
    <property type="entry name" value="UPF0473"/>
</dbReference>
<dbReference type="NCBIfam" id="NF010214">
    <property type="entry name" value="PRK13678.1-1"/>
    <property type="match status" value="1"/>
</dbReference>
<dbReference type="PANTHER" id="PTHR40066">
    <property type="entry name" value="UPF0473 PROTEIN CBO2561/CLC_2432"/>
    <property type="match status" value="1"/>
</dbReference>
<dbReference type="PANTHER" id="PTHR40066:SF1">
    <property type="entry name" value="UPF0473 PROTEIN CBO2561_CLC_2432"/>
    <property type="match status" value="1"/>
</dbReference>
<dbReference type="Pfam" id="PF06949">
    <property type="entry name" value="DUF1292"/>
    <property type="match status" value="1"/>
</dbReference>
<evidence type="ECO:0000305" key="1"/>
<accession>Q4L6W2</accession>
<feature type="chain" id="PRO_0000299298" description="UPF0473 protein SH1304">
    <location>
        <begin position="1"/>
        <end position="104"/>
    </location>
</feature>
<reference key="1">
    <citation type="journal article" date="2005" name="J. Bacteriol.">
        <title>Whole-genome sequencing of Staphylococcus haemolyticus uncovers the extreme plasticity of its genome and the evolution of human-colonizing staphylococcal species.</title>
        <authorList>
            <person name="Takeuchi F."/>
            <person name="Watanabe S."/>
            <person name="Baba T."/>
            <person name="Yuzawa H."/>
            <person name="Ito T."/>
            <person name="Morimoto Y."/>
            <person name="Kuroda M."/>
            <person name="Cui L."/>
            <person name="Takahashi M."/>
            <person name="Ankai A."/>
            <person name="Baba S."/>
            <person name="Fukui S."/>
            <person name="Lee J.C."/>
            <person name="Hiramatsu K."/>
        </authorList>
    </citation>
    <scope>NUCLEOTIDE SEQUENCE [LARGE SCALE GENOMIC DNA]</scope>
    <source>
        <strain>JCSC1435</strain>
    </source>
</reference>